<protein>
    <recommendedName>
        <fullName evidence="1">Bifunctional glutamine synthetase adenylyltransferase/adenylyl-removing enzyme</fullName>
    </recommendedName>
    <alternativeName>
        <fullName evidence="1">ATP:glutamine synthetase adenylyltransferase</fullName>
    </alternativeName>
    <alternativeName>
        <fullName evidence="1">ATase</fullName>
    </alternativeName>
    <domain>
        <recommendedName>
            <fullName evidence="1">Glutamine synthetase adenylyl-L-tyrosine phosphorylase</fullName>
            <ecNumber evidence="1">2.7.7.89</ecNumber>
        </recommendedName>
        <alternativeName>
            <fullName evidence="1">Adenylyl removase</fullName>
            <shortName evidence="1">AR</shortName>
            <shortName evidence="1">AT-N</shortName>
        </alternativeName>
    </domain>
    <domain>
        <recommendedName>
            <fullName evidence="1">Glutamine synthetase adenylyl transferase</fullName>
            <ecNumber evidence="1">2.7.7.42</ecNumber>
        </recommendedName>
        <alternativeName>
            <fullName evidence="1">Adenylyl transferase</fullName>
            <shortName evidence="1">AT</shortName>
            <shortName evidence="1">AT-C</shortName>
        </alternativeName>
    </domain>
</protein>
<proteinExistence type="inferred from homology"/>
<name>GLNE_SALG2</name>
<dbReference type="EC" id="2.7.7.89" evidence="1"/>
<dbReference type="EC" id="2.7.7.42" evidence="1"/>
<dbReference type="EMBL" id="AM933173">
    <property type="protein sequence ID" value="CAR38898.1"/>
    <property type="molecule type" value="Genomic_DNA"/>
</dbReference>
<dbReference type="RefSeq" id="WP_000188307.1">
    <property type="nucleotide sequence ID" value="NC_011274.1"/>
</dbReference>
<dbReference type="SMR" id="B5REF9"/>
<dbReference type="KEGG" id="seg:SG3097"/>
<dbReference type="HOGENOM" id="CLU_006233_0_1_6"/>
<dbReference type="Proteomes" id="UP000008321">
    <property type="component" value="Chromosome"/>
</dbReference>
<dbReference type="GO" id="GO:0005829">
    <property type="term" value="C:cytosol"/>
    <property type="evidence" value="ECO:0007669"/>
    <property type="project" value="TreeGrafter"/>
</dbReference>
<dbReference type="GO" id="GO:0008882">
    <property type="term" value="F:[glutamate-ammonia-ligase] adenylyltransferase activity"/>
    <property type="evidence" value="ECO:0007669"/>
    <property type="project" value="UniProtKB-UniRule"/>
</dbReference>
<dbReference type="GO" id="GO:0047388">
    <property type="term" value="F:[glutamine synthetase]-adenylyl-L-tyrosine phosphorylase activity"/>
    <property type="evidence" value="ECO:0007669"/>
    <property type="project" value="UniProtKB-EC"/>
</dbReference>
<dbReference type="GO" id="GO:0005524">
    <property type="term" value="F:ATP binding"/>
    <property type="evidence" value="ECO:0007669"/>
    <property type="project" value="UniProtKB-UniRule"/>
</dbReference>
<dbReference type="GO" id="GO:0000287">
    <property type="term" value="F:magnesium ion binding"/>
    <property type="evidence" value="ECO:0007669"/>
    <property type="project" value="UniProtKB-UniRule"/>
</dbReference>
<dbReference type="GO" id="GO:0000820">
    <property type="term" value="P:regulation of glutamine family amino acid metabolic process"/>
    <property type="evidence" value="ECO:0007669"/>
    <property type="project" value="UniProtKB-UniRule"/>
</dbReference>
<dbReference type="CDD" id="cd05401">
    <property type="entry name" value="NT_GlnE_GlnD_like"/>
    <property type="match status" value="2"/>
</dbReference>
<dbReference type="FunFam" id="1.10.4050.10:FF:000001">
    <property type="entry name" value="Bifunctional glutamine synthetase adenylyltransferase/adenylyl-removing enzyme"/>
    <property type="match status" value="1"/>
</dbReference>
<dbReference type="FunFam" id="1.20.120.1510:FF:000001">
    <property type="entry name" value="Bifunctional glutamine synthetase adenylyltransferase/adenylyl-removing enzyme"/>
    <property type="match status" value="1"/>
</dbReference>
<dbReference type="FunFam" id="1.20.120.330:FF:000005">
    <property type="entry name" value="Bifunctional glutamine synthetase adenylyltransferase/adenylyl-removing enzyme"/>
    <property type="match status" value="1"/>
</dbReference>
<dbReference type="FunFam" id="1.20.120.330:FF:000008">
    <property type="entry name" value="Bifunctional glutamine synthetase adenylyltransferase/adenylyl-removing enzyme"/>
    <property type="match status" value="1"/>
</dbReference>
<dbReference type="FunFam" id="3.30.460.10:FF:000009">
    <property type="entry name" value="Bifunctional glutamine synthetase adenylyltransferase/adenylyl-removing enzyme"/>
    <property type="match status" value="1"/>
</dbReference>
<dbReference type="FunFam" id="3.30.460.10:FF:000014">
    <property type="entry name" value="Bifunctional glutamine synthetase adenylyltransferase/adenylyl-removing enzyme"/>
    <property type="match status" value="1"/>
</dbReference>
<dbReference type="Gene3D" id="1.20.120.1510">
    <property type="match status" value="1"/>
</dbReference>
<dbReference type="Gene3D" id="3.30.460.10">
    <property type="entry name" value="Beta Polymerase, domain 2"/>
    <property type="match status" value="2"/>
</dbReference>
<dbReference type="Gene3D" id="1.10.4050.10">
    <property type="entry name" value="Glutamine synthase adenylyltransferase GlnE"/>
    <property type="match status" value="1"/>
</dbReference>
<dbReference type="Gene3D" id="1.20.120.330">
    <property type="entry name" value="Nucleotidyltransferases domain 2"/>
    <property type="match status" value="2"/>
</dbReference>
<dbReference type="HAMAP" id="MF_00802">
    <property type="entry name" value="GlnE"/>
    <property type="match status" value="1"/>
</dbReference>
<dbReference type="InterPro" id="IPR023057">
    <property type="entry name" value="GlnE"/>
</dbReference>
<dbReference type="InterPro" id="IPR005190">
    <property type="entry name" value="GlnE_rpt_dom"/>
</dbReference>
<dbReference type="InterPro" id="IPR043519">
    <property type="entry name" value="NT_sf"/>
</dbReference>
<dbReference type="InterPro" id="IPR013546">
    <property type="entry name" value="PII_UdlTrfase/GS_AdlTrfase"/>
</dbReference>
<dbReference type="NCBIfam" id="NF008292">
    <property type="entry name" value="PRK11072.1"/>
    <property type="match status" value="1"/>
</dbReference>
<dbReference type="PANTHER" id="PTHR30621:SF0">
    <property type="entry name" value="BIFUNCTIONAL GLUTAMINE SYNTHETASE ADENYLYLTRANSFERASE_ADENYLYL-REMOVING ENZYME"/>
    <property type="match status" value="1"/>
</dbReference>
<dbReference type="PANTHER" id="PTHR30621">
    <property type="entry name" value="GLUTAMINE SYNTHETASE ADENYLYLTRANSFERASE"/>
    <property type="match status" value="1"/>
</dbReference>
<dbReference type="Pfam" id="PF08335">
    <property type="entry name" value="GlnD_UR_UTase"/>
    <property type="match status" value="2"/>
</dbReference>
<dbReference type="Pfam" id="PF03710">
    <property type="entry name" value="GlnE"/>
    <property type="match status" value="2"/>
</dbReference>
<dbReference type="SUPFAM" id="SSF81301">
    <property type="entry name" value="Nucleotidyltransferase"/>
    <property type="match status" value="2"/>
</dbReference>
<dbReference type="SUPFAM" id="SSF81593">
    <property type="entry name" value="Nucleotidyltransferase substrate binding subunit/domain"/>
    <property type="match status" value="2"/>
</dbReference>
<sequence length="947" mass="108053">MTPLSSPLSQYWQTVVERLPEGFTETSLSVQAKSVLTFSDFALDSVIAHPEWLAELESASPQADEWRHYAGWLQEALAGVCDDASLMRELRFFRRRIMVRIAWAQTLSLVDDETILQQLSHLAETLIVGARDWLYAACCREWGTPCNPQGVPQPLLILGMGKLGGGELNFSSDIDLIFAWPEHGETRGGRRELDNAQFFTRLGQRLIKALDQPTMDGFVYRVDMRLRPFGDSGPLVLSFAALEDYYQEQGRDWERYAMVKARLMGDNDDAWSRELRAMLRPFVFRRYIDFSVIQSLRNMKGMIAREVRRRGLKDNIKLGAGGIREIEFIVQVFQLIRGGREPSLQSRSLLPTLDAIAALHLLPENDVAQLRVAYLFLRRLENLLQSINDEQTQTLPADDLNRARLAWGMKAENWPQLVGELTDHMANVRRVFNELIGDDEADTPQEEERSEPWREVWQDALQEDDSTPVLAHLADEDRRQVLTLIADFRKELDKRPIGPRGRQVLDQLMPHLLADVCSREDAAVTLSRITPLLAGIVTRTTYLELLSEFPGALKHLIMLCAASPMIASQLARYPLLLDELLDPGTLYQPTATDAYRDELRQYLLRVPEEDEEQQLEALRQFKQAQLLRIAAADIAGTLPVMKVSDHLTWLAEAMIDAVVQQAWTQMVARYGQPAHLDERQGRGFAVVGYGKLGGWELGYSSDLDLIFLHDCPMDVMTNGEREIDGRQFYLRLAQRIMHLFSTRTSSGILYEVDARLRPSGAAGMLVTSADAFADYQQHEAWTWEHQALVRARVVYGDPQLTSQFDTVRRTIMTTARDGKTLQTEVREMREKMRAHLGNKHRDRFDIKADEGGITDIEFIAQYLVLRYAHEKPKLTRWSDNVRILELLAQNGIMDEHEAQALTVAYTTLRDELHHLALQELPGHVAQTCFSKERALVQASWRKWLVAV</sequence>
<gene>
    <name evidence="1" type="primary">glnE</name>
    <name type="ordered locus">SG3097</name>
</gene>
<reference key="1">
    <citation type="journal article" date="2008" name="Genome Res.">
        <title>Comparative genome analysis of Salmonella enteritidis PT4 and Salmonella gallinarum 287/91 provides insights into evolutionary and host adaptation pathways.</title>
        <authorList>
            <person name="Thomson N.R."/>
            <person name="Clayton D.J."/>
            <person name="Windhorst D."/>
            <person name="Vernikos G."/>
            <person name="Davidson S."/>
            <person name="Churcher C."/>
            <person name="Quail M.A."/>
            <person name="Stevens M."/>
            <person name="Jones M.A."/>
            <person name="Watson M."/>
            <person name="Barron A."/>
            <person name="Layton A."/>
            <person name="Pickard D."/>
            <person name="Kingsley R.A."/>
            <person name="Bignell A."/>
            <person name="Clark L."/>
            <person name="Harris B."/>
            <person name="Ormond D."/>
            <person name="Abdellah Z."/>
            <person name="Brooks K."/>
            <person name="Cherevach I."/>
            <person name="Chillingworth T."/>
            <person name="Woodward J."/>
            <person name="Norberczak H."/>
            <person name="Lord A."/>
            <person name="Arrowsmith C."/>
            <person name="Jagels K."/>
            <person name="Moule S."/>
            <person name="Mungall K."/>
            <person name="Saunders M."/>
            <person name="Whitehead S."/>
            <person name="Chabalgoity J.A."/>
            <person name="Maskell D."/>
            <person name="Humphreys T."/>
            <person name="Roberts M."/>
            <person name="Barrow P.A."/>
            <person name="Dougan G."/>
            <person name="Parkhill J."/>
        </authorList>
    </citation>
    <scope>NUCLEOTIDE SEQUENCE [LARGE SCALE GENOMIC DNA]</scope>
    <source>
        <strain>287/91 / NCTC 13346</strain>
    </source>
</reference>
<accession>B5REF9</accession>
<feature type="chain" id="PRO_1000133913" description="Bifunctional glutamine synthetase adenylyltransferase/adenylyl-removing enzyme">
    <location>
        <begin position="1"/>
        <end position="947"/>
    </location>
</feature>
<feature type="region of interest" description="Adenylyl removase" evidence="1">
    <location>
        <begin position="1"/>
        <end position="440"/>
    </location>
</feature>
<feature type="region of interest" description="Adenylyl transferase" evidence="1">
    <location>
        <begin position="450"/>
        <end position="947"/>
    </location>
</feature>
<keyword id="KW-0067">ATP-binding</keyword>
<keyword id="KW-0460">Magnesium</keyword>
<keyword id="KW-0511">Multifunctional enzyme</keyword>
<keyword id="KW-0547">Nucleotide-binding</keyword>
<keyword id="KW-0548">Nucleotidyltransferase</keyword>
<keyword id="KW-0808">Transferase</keyword>
<comment type="function">
    <text evidence="1">Involved in the regulation of glutamine synthetase GlnA, a key enzyme in the process to assimilate ammonia. When cellular nitrogen levels are high, the C-terminal adenylyl transferase (AT) inactivates GlnA by covalent transfer of an adenylyl group from ATP to specific tyrosine residue of GlnA, thus reducing its activity. Conversely, when nitrogen levels are low, the N-terminal adenylyl removase (AR) activates GlnA by removing the adenylyl group by phosphorolysis, increasing its activity. The regulatory region of GlnE binds the signal transduction protein PII (GlnB) which indicates the nitrogen status of the cell.</text>
</comment>
<comment type="catalytic activity">
    <reaction evidence="1">
        <text>[glutamine synthetase]-O(4)-(5'-adenylyl)-L-tyrosine + phosphate = [glutamine synthetase]-L-tyrosine + ADP</text>
        <dbReference type="Rhea" id="RHEA:43716"/>
        <dbReference type="Rhea" id="RHEA-COMP:10660"/>
        <dbReference type="Rhea" id="RHEA-COMP:10661"/>
        <dbReference type="ChEBI" id="CHEBI:43474"/>
        <dbReference type="ChEBI" id="CHEBI:46858"/>
        <dbReference type="ChEBI" id="CHEBI:83624"/>
        <dbReference type="ChEBI" id="CHEBI:456216"/>
        <dbReference type="EC" id="2.7.7.89"/>
    </reaction>
</comment>
<comment type="catalytic activity">
    <reaction evidence="1">
        <text>[glutamine synthetase]-L-tyrosine + ATP = [glutamine synthetase]-O(4)-(5'-adenylyl)-L-tyrosine + diphosphate</text>
        <dbReference type="Rhea" id="RHEA:18589"/>
        <dbReference type="Rhea" id="RHEA-COMP:10660"/>
        <dbReference type="Rhea" id="RHEA-COMP:10661"/>
        <dbReference type="ChEBI" id="CHEBI:30616"/>
        <dbReference type="ChEBI" id="CHEBI:33019"/>
        <dbReference type="ChEBI" id="CHEBI:46858"/>
        <dbReference type="ChEBI" id="CHEBI:83624"/>
        <dbReference type="EC" id="2.7.7.42"/>
    </reaction>
</comment>
<comment type="cofactor">
    <cofactor evidence="1">
        <name>Mg(2+)</name>
        <dbReference type="ChEBI" id="CHEBI:18420"/>
    </cofactor>
</comment>
<comment type="similarity">
    <text evidence="1">Belongs to the GlnE family.</text>
</comment>
<evidence type="ECO:0000255" key="1">
    <source>
        <dbReference type="HAMAP-Rule" id="MF_00802"/>
    </source>
</evidence>
<organism>
    <name type="scientific">Salmonella gallinarum (strain 287/91 / NCTC 13346)</name>
    <dbReference type="NCBI Taxonomy" id="550538"/>
    <lineage>
        <taxon>Bacteria</taxon>
        <taxon>Pseudomonadati</taxon>
        <taxon>Pseudomonadota</taxon>
        <taxon>Gammaproteobacteria</taxon>
        <taxon>Enterobacterales</taxon>
        <taxon>Enterobacteriaceae</taxon>
        <taxon>Salmonella</taxon>
    </lineage>
</organism>